<sequence length="382" mass="42525">MKITKITTYRLPPRWMFLKIETDEGVVGWGEPVIEGRARTVEAAVHELSDYLIGQDPSRINDLWQVMYRAGFYRGGPILMSAIAGIDQALWDIKGKVLNAPVWQLMGGLVRDKIKAYSWVGGDRPADVIDGIKTLREIGFDTFKLNGCEELGLIDNSRAVDAAVNTVAQIREAFGNQIEFGLDFHGRVSAPMAKVLIKELEPYRPLFIEEPVLAEQAEYYPKLAAQTHIPLAAGERMFSRFDFKRVLEAGGISILQPDLSHAGGITECYKIAGMAEAYDVTLAPHCPLGPIALAACLHIDFVSYNAVLQEQSMGIHYNKGAELLDFVKNKEDFSMAGGFFKPLTKPGLGVEIDEAKVIEFSKNAPDWRNPLWRHEDNSVAEW</sequence>
<name>DGOD_ECOUT</name>
<accession>Q1R4P4</accession>
<organism>
    <name type="scientific">Escherichia coli (strain UTI89 / UPEC)</name>
    <dbReference type="NCBI Taxonomy" id="364106"/>
    <lineage>
        <taxon>Bacteria</taxon>
        <taxon>Pseudomonadati</taxon>
        <taxon>Pseudomonadota</taxon>
        <taxon>Gammaproteobacteria</taxon>
        <taxon>Enterobacterales</taxon>
        <taxon>Enterobacteriaceae</taxon>
        <taxon>Escherichia</taxon>
    </lineage>
</organism>
<gene>
    <name evidence="2" type="primary">dgoD</name>
    <name type="ordered locus">UTI89_C4243</name>
</gene>
<comment type="function">
    <text evidence="2">Catalyzes the dehydration of D-galactonate to 2-keto-3-deoxy-D-galactonate.</text>
</comment>
<comment type="catalytic activity">
    <reaction evidence="2">
        <text>D-galactonate = 2-dehydro-3-deoxy-D-galactonate + H2O</text>
        <dbReference type="Rhea" id="RHEA:18649"/>
        <dbReference type="ChEBI" id="CHEBI:12931"/>
        <dbReference type="ChEBI" id="CHEBI:15377"/>
        <dbReference type="ChEBI" id="CHEBI:57989"/>
        <dbReference type="EC" id="4.2.1.6"/>
    </reaction>
</comment>
<comment type="cofactor">
    <cofactor evidence="2">
        <name>Mg(2+)</name>
        <dbReference type="ChEBI" id="CHEBI:18420"/>
    </cofactor>
    <text evidence="2">Binds 1 Mg(2+) ion per subunit.</text>
</comment>
<comment type="pathway">
    <text evidence="2">Carbohydrate acid metabolism; D-galactonate degradation; D-glyceraldehyde 3-phosphate and pyruvate from D-galactonate: step 1/3.</text>
</comment>
<comment type="miscellaneous">
    <text evidence="2">Reaction proceeds via an anti dehydration.</text>
</comment>
<comment type="similarity">
    <text evidence="2">Belongs to the mandelate racemase/muconate lactonizing enzyme family. GalD subfamily.</text>
</comment>
<proteinExistence type="inferred from homology"/>
<protein>
    <recommendedName>
        <fullName evidence="2">D-galactonate dehydratase</fullName>
        <shortName evidence="2">GalD</shortName>
        <ecNumber evidence="2">4.2.1.6</ecNumber>
    </recommendedName>
</protein>
<reference key="1">
    <citation type="journal article" date="2006" name="Proc. Natl. Acad. Sci. U.S.A.">
        <title>Identification of genes subject to positive selection in uropathogenic strains of Escherichia coli: a comparative genomics approach.</title>
        <authorList>
            <person name="Chen S.L."/>
            <person name="Hung C.-S."/>
            <person name="Xu J."/>
            <person name="Reigstad C.S."/>
            <person name="Magrini V."/>
            <person name="Sabo A."/>
            <person name="Blasiar D."/>
            <person name="Bieri T."/>
            <person name="Meyer R.R."/>
            <person name="Ozersky P."/>
            <person name="Armstrong J.R."/>
            <person name="Fulton R.S."/>
            <person name="Latreille J.P."/>
            <person name="Spieth J."/>
            <person name="Hooton T.M."/>
            <person name="Mardis E.R."/>
            <person name="Hultgren S.J."/>
            <person name="Gordon J.I."/>
        </authorList>
    </citation>
    <scope>NUCLEOTIDE SEQUENCE [LARGE SCALE GENOMIC DNA]</scope>
    <source>
        <strain>UTI89 / UPEC</strain>
    </source>
</reference>
<dbReference type="EC" id="4.2.1.6" evidence="2"/>
<dbReference type="EMBL" id="CP000243">
    <property type="protein sequence ID" value="ABE09670.1"/>
    <property type="molecule type" value="Genomic_DNA"/>
</dbReference>
<dbReference type="RefSeq" id="WP_000705009.1">
    <property type="nucleotide sequence ID" value="NZ_CP064825.1"/>
</dbReference>
<dbReference type="SMR" id="Q1R4P4"/>
<dbReference type="KEGG" id="eci:UTI89_C4243"/>
<dbReference type="HOGENOM" id="CLU_030273_3_2_6"/>
<dbReference type="UniPathway" id="UPA00081">
    <property type="reaction ID" value="UER00518"/>
</dbReference>
<dbReference type="Proteomes" id="UP000001952">
    <property type="component" value="Chromosome"/>
</dbReference>
<dbReference type="GO" id="GO:0008869">
    <property type="term" value="F:galactonate dehydratase activity"/>
    <property type="evidence" value="ECO:0007669"/>
    <property type="project" value="UniProtKB-UniRule"/>
</dbReference>
<dbReference type="GO" id="GO:0000287">
    <property type="term" value="F:magnesium ion binding"/>
    <property type="evidence" value="ECO:0007669"/>
    <property type="project" value="UniProtKB-UniRule"/>
</dbReference>
<dbReference type="GO" id="GO:0009063">
    <property type="term" value="P:amino acid catabolic process"/>
    <property type="evidence" value="ECO:0007669"/>
    <property type="project" value="InterPro"/>
</dbReference>
<dbReference type="GO" id="GO:0034194">
    <property type="term" value="P:D-galactonate catabolic process"/>
    <property type="evidence" value="ECO:0007669"/>
    <property type="project" value="UniProtKB-UniRule"/>
</dbReference>
<dbReference type="CDD" id="cd03325">
    <property type="entry name" value="D-galactonate_dehydratase"/>
    <property type="match status" value="1"/>
</dbReference>
<dbReference type="FunFam" id="3.20.20.120:FF:000008">
    <property type="entry name" value="D-galactonate dehydratase"/>
    <property type="match status" value="1"/>
</dbReference>
<dbReference type="FunFam" id="3.30.390.10:FF:000003">
    <property type="entry name" value="D-galactonate dehydratase"/>
    <property type="match status" value="1"/>
</dbReference>
<dbReference type="Gene3D" id="3.20.20.120">
    <property type="entry name" value="Enolase-like C-terminal domain"/>
    <property type="match status" value="1"/>
</dbReference>
<dbReference type="Gene3D" id="3.30.390.10">
    <property type="entry name" value="Enolase-like, N-terminal domain"/>
    <property type="match status" value="1"/>
</dbReference>
<dbReference type="HAMAP" id="MF_01289">
    <property type="entry name" value="Galacton_dehydrat"/>
    <property type="match status" value="1"/>
</dbReference>
<dbReference type="InterPro" id="IPR034593">
    <property type="entry name" value="DgoD-like"/>
</dbReference>
<dbReference type="InterPro" id="IPR036849">
    <property type="entry name" value="Enolase-like_C_sf"/>
</dbReference>
<dbReference type="InterPro" id="IPR029017">
    <property type="entry name" value="Enolase-like_N"/>
</dbReference>
<dbReference type="InterPro" id="IPR029065">
    <property type="entry name" value="Enolase_C-like"/>
</dbReference>
<dbReference type="InterPro" id="IPR023592">
    <property type="entry name" value="Galactonate_deHydtase"/>
</dbReference>
<dbReference type="InterPro" id="IPR018110">
    <property type="entry name" value="Mandel_Rmase/mucon_lact_enz_CS"/>
</dbReference>
<dbReference type="InterPro" id="IPR013342">
    <property type="entry name" value="Mandelate_racemase_C"/>
</dbReference>
<dbReference type="InterPro" id="IPR013341">
    <property type="entry name" value="Mandelate_racemase_N_dom"/>
</dbReference>
<dbReference type="NCBIfam" id="NF010624">
    <property type="entry name" value="PRK14017.1"/>
    <property type="match status" value="1"/>
</dbReference>
<dbReference type="PANTHER" id="PTHR48080:SF2">
    <property type="entry name" value="D-GALACTONATE DEHYDRATASE"/>
    <property type="match status" value="1"/>
</dbReference>
<dbReference type="PANTHER" id="PTHR48080">
    <property type="entry name" value="D-GALACTONATE DEHYDRATASE-RELATED"/>
    <property type="match status" value="1"/>
</dbReference>
<dbReference type="Pfam" id="PF13378">
    <property type="entry name" value="MR_MLE_C"/>
    <property type="match status" value="1"/>
</dbReference>
<dbReference type="Pfam" id="PF02746">
    <property type="entry name" value="MR_MLE_N"/>
    <property type="match status" value="1"/>
</dbReference>
<dbReference type="SFLD" id="SFLDF00003">
    <property type="entry name" value="D-galactonate_dehydratase"/>
    <property type="match status" value="1"/>
</dbReference>
<dbReference type="SFLD" id="SFLDG00179">
    <property type="entry name" value="mandelate_racemase"/>
    <property type="match status" value="1"/>
</dbReference>
<dbReference type="SMART" id="SM00922">
    <property type="entry name" value="MR_MLE"/>
    <property type="match status" value="1"/>
</dbReference>
<dbReference type="SUPFAM" id="SSF51604">
    <property type="entry name" value="Enolase C-terminal domain-like"/>
    <property type="match status" value="1"/>
</dbReference>
<dbReference type="SUPFAM" id="SSF54826">
    <property type="entry name" value="Enolase N-terminal domain-like"/>
    <property type="match status" value="1"/>
</dbReference>
<dbReference type="PROSITE" id="PS00908">
    <property type="entry name" value="MR_MLE_1"/>
    <property type="match status" value="1"/>
</dbReference>
<dbReference type="PROSITE" id="PS00909">
    <property type="entry name" value="MR_MLE_2"/>
    <property type="match status" value="1"/>
</dbReference>
<evidence type="ECO:0000250" key="1"/>
<evidence type="ECO:0000255" key="2">
    <source>
        <dbReference type="HAMAP-Rule" id="MF_01289"/>
    </source>
</evidence>
<feature type="chain" id="PRO_0000352626" description="D-galactonate dehydratase">
    <location>
        <begin position="1"/>
        <end position="382"/>
    </location>
</feature>
<feature type="active site" description="Proton donor" evidence="1">
    <location>
        <position position="185"/>
    </location>
</feature>
<feature type="active site" description="Proton acceptor" evidence="1">
    <location>
        <position position="285"/>
    </location>
</feature>
<feature type="binding site" evidence="2">
    <location>
        <position position="183"/>
    </location>
    <ligand>
        <name>Mg(2+)</name>
        <dbReference type="ChEBI" id="CHEBI:18420"/>
    </ligand>
</feature>
<feature type="binding site" evidence="2">
    <location>
        <position position="209"/>
    </location>
    <ligand>
        <name>Mg(2+)</name>
        <dbReference type="ChEBI" id="CHEBI:18420"/>
    </ligand>
</feature>
<feature type="binding site" evidence="2">
    <location>
        <position position="235"/>
    </location>
    <ligand>
        <name>Mg(2+)</name>
        <dbReference type="ChEBI" id="CHEBI:18420"/>
    </ligand>
</feature>
<feature type="site" description="Increases basicity of active site His" evidence="2">
    <location>
        <position position="258"/>
    </location>
</feature>
<feature type="site" description="Transition state stabilizer" evidence="2">
    <location>
        <position position="310"/>
    </location>
</feature>
<keyword id="KW-0456">Lyase</keyword>
<keyword id="KW-0460">Magnesium</keyword>
<keyword id="KW-0479">Metal-binding</keyword>